<gene>
    <name type="primary">rplT</name>
</gene>
<proteinExistence type="inferred from homology"/>
<accession>P0A480</accession>
<accession>O68846</accession>
<accession>Q9KMN6</accession>
<protein>
    <recommendedName>
        <fullName evidence="2">Large ribosomal subunit protein bL20</fullName>
    </recommendedName>
    <alternativeName>
        <fullName>50S ribosomal protein L20</fullName>
    </alternativeName>
</protein>
<dbReference type="EMBL" id="AF180939">
    <property type="protein sequence ID" value="AAG34727.1"/>
    <property type="molecule type" value="Genomic_DNA"/>
</dbReference>
<dbReference type="RefSeq" id="WP_001138366.1">
    <property type="nucleotide sequence ID" value="NZ_VSIL01000083.1"/>
</dbReference>
<dbReference type="SMR" id="P0A480"/>
<dbReference type="STRING" id="674.VM_20730"/>
<dbReference type="GeneID" id="93954679"/>
<dbReference type="eggNOG" id="COG0292">
    <property type="taxonomic scope" value="Bacteria"/>
</dbReference>
<dbReference type="OrthoDB" id="9808966at2"/>
<dbReference type="GO" id="GO:1990904">
    <property type="term" value="C:ribonucleoprotein complex"/>
    <property type="evidence" value="ECO:0007669"/>
    <property type="project" value="UniProtKB-KW"/>
</dbReference>
<dbReference type="GO" id="GO:0005840">
    <property type="term" value="C:ribosome"/>
    <property type="evidence" value="ECO:0007669"/>
    <property type="project" value="UniProtKB-KW"/>
</dbReference>
<dbReference type="GO" id="GO:0019843">
    <property type="term" value="F:rRNA binding"/>
    <property type="evidence" value="ECO:0007669"/>
    <property type="project" value="UniProtKB-UniRule"/>
</dbReference>
<dbReference type="GO" id="GO:0003735">
    <property type="term" value="F:structural constituent of ribosome"/>
    <property type="evidence" value="ECO:0007669"/>
    <property type="project" value="InterPro"/>
</dbReference>
<dbReference type="GO" id="GO:0000027">
    <property type="term" value="P:ribosomal large subunit assembly"/>
    <property type="evidence" value="ECO:0007669"/>
    <property type="project" value="UniProtKB-UniRule"/>
</dbReference>
<dbReference type="GO" id="GO:0006412">
    <property type="term" value="P:translation"/>
    <property type="evidence" value="ECO:0007669"/>
    <property type="project" value="InterPro"/>
</dbReference>
<dbReference type="CDD" id="cd07026">
    <property type="entry name" value="Ribosomal_L20"/>
    <property type="match status" value="1"/>
</dbReference>
<dbReference type="FunFam" id="1.10.1900.20:FF:000001">
    <property type="entry name" value="50S ribosomal protein L20"/>
    <property type="match status" value="1"/>
</dbReference>
<dbReference type="Gene3D" id="6.10.160.10">
    <property type="match status" value="1"/>
</dbReference>
<dbReference type="Gene3D" id="1.10.1900.20">
    <property type="entry name" value="Ribosomal protein L20"/>
    <property type="match status" value="1"/>
</dbReference>
<dbReference type="HAMAP" id="MF_00382">
    <property type="entry name" value="Ribosomal_bL20"/>
    <property type="match status" value="1"/>
</dbReference>
<dbReference type="InterPro" id="IPR005813">
    <property type="entry name" value="Ribosomal_bL20"/>
</dbReference>
<dbReference type="InterPro" id="IPR049946">
    <property type="entry name" value="RIBOSOMAL_L20_CS"/>
</dbReference>
<dbReference type="InterPro" id="IPR035566">
    <property type="entry name" value="Ribosomal_protein_bL20_C"/>
</dbReference>
<dbReference type="NCBIfam" id="TIGR01032">
    <property type="entry name" value="rplT_bact"/>
    <property type="match status" value="1"/>
</dbReference>
<dbReference type="PANTHER" id="PTHR10986">
    <property type="entry name" value="39S RIBOSOMAL PROTEIN L20"/>
    <property type="match status" value="1"/>
</dbReference>
<dbReference type="Pfam" id="PF00453">
    <property type="entry name" value="Ribosomal_L20"/>
    <property type="match status" value="1"/>
</dbReference>
<dbReference type="PRINTS" id="PR00062">
    <property type="entry name" value="RIBOSOMALL20"/>
</dbReference>
<dbReference type="SUPFAM" id="SSF74731">
    <property type="entry name" value="Ribosomal protein L20"/>
    <property type="match status" value="1"/>
</dbReference>
<dbReference type="PROSITE" id="PS00937">
    <property type="entry name" value="RIBOSOMAL_L20"/>
    <property type="match status" value="1"/>
</dbReference>
<organism>
    <name type="scientific">Vibrio mimicus</name>
    <dbReference type="NCBI Taxonomy" id="674"/>
    <lineage>
        <taxon>Bacteria</taxon>
        <taxon>Pseudomonadati</taxon>
        <taxon>Pseudomonadota</taxon>
        <taxon>Gammaproteobacteria</taxon>
        <taxon>Vibrionales</taxon>
        <taxon>Vibrionaceae</taxon>
        <taxon>Vibrio</taxon>
    </lineage>
</organism>
<name>RL20_VIBMI</name>
<evidence type="ECO:0000250" key="1"/>
<evidence type="ECO:0000305" key="2"/>
<reference key="1">
    <citation type="journal article" date="2001" name="Proc. Natl. Acad. Sci. U.S.A.">
        <title>The evolutionary history of chromosomal super-integrons provides an ancestry for multi-resistant integrons.</title>
        <authorList>
            <person name="Rowe-Magnus D.A."/>
            <person name="Guerout A.-M."/>
            <person name="Ploncard P."/>
            <person name="Dychinco B."/>
            <person name="Davies J."/>
            <person name="Mazel D."/>
        </authorList>
    </citation>
    <scope>NUCLEOTIDE SEQUENCE [GENOMIC DNA]</scope>
    <source>
        <strain>ATCC 33653 / CDC 1721-77 / LMG 7896 / NCTC 11435</strain>
    </source>
</reference>
<sequence length="117" mass="13366">MPRVKRGVQARARHKKVLKQAKGYYGARSRVYRVAFQAVIKAGQYAYRDRRAKKRQFRQLWIARINAAARQNGLSYSRFINGLKKASIEIDRKILADIAVFDKAAFAVLVEKAKGAL</sequence>
<comment type="function">
    <text evidence="1">Binds directly to 23S ribosomal RNA and is necessary for the in vitro assembly process of the 50S ribosomal subunit. It is not involved in the protein synthesizing functions of that subunit (By similarity).</text>
</comment>
<comment type="similarity">
    <text evidence="2">Belongs to the bacterial ribosomal protein bL20 family.</text>
</comment>
<keyword id="KW-0687">Ribonucleoprotein</keyword>
<keyword id="KW-0689">Ribosomal protein</keyword>
<keyword id="KW-0694">RNA-binding</keyword>
<keyword id="KW-0699">rRNA-binding</keyword>
<feature type="chain" id="PRO_0000177260" description="Large ribosomal subunit protein bL20">
    <location>
        <begin position="1"/>
        <end position="117"/>
    </location>
</feature>